<name>TBXT_XENLA</name>
<accession>P24781</accession>
<accession>Q6IP86</accession>
<proteinExistence type="evidence at protein level"/>
<reference key="1">
    <citation type="journal article" date="1991" name="Cell">
        <title>Expression of a Xenopus homolog of Brachyury (T) is an immediate-early response to mesoderm induction.</title>
        <authorList>
            <person name="Smith J.C."/>
            <person name="Price B.M."/>
            <person name="Green J.B."/>
            <person name="Weigel D."/>
            <person name="Herrmann B.G."/>
        </authorList>
    </citation>
    <scope>NUCLEOTIDE SEQUENCE [MRNA]</scope>
    <source>
        <tissue>Neurula</tissue>
    </source>
</reference>
<reference key="2">
    <citation type="submission" date="2004-06" db="EMBL/GenBank/DDBJ databases">
        <authorList>
            <consortium name="NIH - Xenopus Gene Collection (XGC) project"/>
        </authorList>
    </citation>
    <scope>NUCLEOTIDE SEQUENCE [LARGE SCALE MRNA]</scope>
    <source>
        <tissue>Gastrula</tissue>
    </source>
</reference>
<reference key="3">
    <citation type="journal article" date="1994" name="EMBO J.">
        <title>Specification of mesodermal pattern in Xenopus laevis by interactions between Brachyury, noggin and Xwnt-8.</title>
        <authorList>
            <person name="Cunliffe V."/>
            <person name="Smith J.C."/>
        </authorList>
    </citation>
    <scope>FUNCTION</scope>
</reference>
<reference key="4">
    <citation type="journal article" date="1999" name="Development">
        <title>derriere: a TGF-beta family member required for posterior development in Xenopus.</title>
        <authorList>
            <person name="Sun B.I."/>
            <person name="Bush S.M."/>
            <person name="Collins-Racie L.A."/>
            <person name="LaVallie E.R."/>
            <person name="DiBlasio-Smith E.A."/>
            <person name="Wolfman N.M."/>
            <person name="McCoy J.M."/>
            <person name="Sive H.L."/>
        </authorList>
    </citation>
    <scope>INDUCTION</scope>
</reference>
<reference key="5">
    <citation type="journal article" date="1999" name="Development">
        <title>Xenopus nodal-related signaling is essential for mesendodermal patterning during early embryogenesis.</title>
        <authorList>
            <person name="Osada S."/>
            <person name="Wright C.V.E."/>
        </authorList>
    </citation>
    <scope>INDUCTION</scope>
</reference>
<reference key="6">
    <citation type="journal article" date="2000" name="Gene">
        <title>Differential DNA binding and transcription modulation by three T-box proteins, T, TBX1 and TBX2.</title>
        <authorList>
            <person name="Sinha S."/>
            <person name="Abraham S."/>
            <person name="Gronostajski R.M."/>
            <person name="Campbell C.E."/>
        </authorList>
    </citation>
    <scope>FUNCTION</scope>
</reference>
<reference key="7">
    <citation type="journal article" date="2002" name="Dev. Growth Differ.">
        <title>Xenopus Brachyury regulates mesodermal expression of Zic3, a gene controlling left-right asymmetry.</title>
        <authorList>
            <person name="Kitaguchi T."/>
            <person name="Mizugishi K."/>
            <person name="Hatayama M."/>
            <person name="Aruga J."/>
            <person name="Mikoshiba K."/>
        </authorList>
    </citation>
    <scope>FUNCTION</scope>
</reference>
<reference key="8">
    <citation type="journal article" date="1997" name="Nature">
        <title>Crystallographic structure of the T domain-DNA complex of the Brachyury transcription factor.</title>
        <authorList>
            <person name="Mueller C.W."/>
            <person name="Herrmann B.G."/>
        </authorList>
    </citation>
    <scope>X-RAY CRYSTALLOGRAPHY (2.5 ANGSTROMS) OF 39-222</scope>
    <scope>SUBUNIT</scope>
</reference>
<gene>
    <name evidence="1" type="primary">tbxt</name>
    <name type="synonym">bra</name>
    <name type="synonym">t</name>
</gene>
<protein>
    <recommendedName>
        <fullName evidence="11">T-box transcription factor T</fullName>
    </recommendedName>
    <alternativeName>
        <fullName evidence="11">Brachyury protein</fullName>
        <shortName>xBRA</shortName>
    </alternativeName>
    <alternativeName>
        <fullName>Protein T</fullName>
    </alternativeName>
</protein>
<sequence>MSATESCAKNVQYRVDHLLSAVENELQAGSEKGDPTEKELKVSLEERDLWTRFKELTNEMIVTKNGRRMFPVLKVSMSGLDPNAMYTVLLDFVAADNHRWKYVNGEWVPGGKPEPQAPSCVYIHPDSPNFGAHWMKDPVSFSKVKLTNKMNGGGQIMLNSLHKYEPRIHIVRVGGTQRMITSHSFPETQFIAVTAYQNEEITALKIKHNPFAKAFLDAKERNDYKDILDEGIDSQHSNFSQLGTWLIPNGGSLCSPNPHTQFGAPLSLSSPHGCERYSSLRNHRSAPYPSPYTHRNNSPNNLADNSSACLSMLQSHDNWSTLQMPAHTGMLPMSHSTGTPPPSSQYPSLWSVSNSAITPVSQSGGITNGISSQYLLGSTPHYSSLSHAVPSPSTGSPLYEHGAQTEIAENQYDVTAHSRLSSTWTPVAPPSV</sequence>
<organism>
    <name type="scientific">Xenopus laevis</name>
    <name type="common">African clawed frog</name>
    <dbReference type="NCBI Taxonomy" id="8355"/>
    <lineage>
        <taxon>Eukaryota</taxon>
        <taxon>Metazoa</taxon>
        <taxon>Chordata</taxon>
        <taxon>Craniata</taxon>
        <taxon>Vertebrata</taxon>
        <taxon>Euteleostomi</taxon>
        <taxon>Amphibia</taxon>
        <taxon>Batrachia</taxon>
        <taxon>Anura</taxon>
        <taxon>Pipoidea</taxon>
        <taxon>Pipidae</taxon>
        <taxon>Xenopodinae</taxon>
        <taxon>Xenopus</taxon>
        <taxon>Xenopus</taxon>
    </lineage>
</organism>
<evidence type="ECO:0000250" key="1">
    <source>
        <dbReference type="UniProtKB" id="O15178"/>
    </source>
</evidence>
<evidence type="ECO:0000255" key="2">
    <source>
        <dbReference type="PROSITE-ProRule" id="PRU00201"/>
    </source>
</evidence>
<evidence type="ECO:0000256" key="3">
    <source>
        <dbReference type="SAM" id="MobiDB-lite"/>
    </source>
</evidence>
<evidence type="ECO:0000269" key="4">
    <source>
    </source>
</evidence>
<evidence type="ECO:0000269" key="5">
    <source>
    </source>
</evidence>
<evidence type="ECO:0000269" key="6">
    <source>
    </source>
</evidence>
<evidence type="ECO:0000269" key="7">
    <source>
    </source>
</evidence>
<evidence type="ECO:0000269" key="8">
    <source>
    </source>
</evidence>
<evidence type="ECO:0000269" key="9">
    <source>
    </source>
</evidence>
<evidence type="ECO:0000303" key="10">
    <source>
    </source>
</evidence>
<evidence type="ECO:0000305" key="11"/>
<evidence type="ECO:0007829" key="12">
    <source>
        <dbReference type="PDB" id="1XBR"/>
    </source>
</evidence>
<dbReference type="EMBL" id="M77243">
    <property type="protein sequence ID" value="AAA49663.1"/>
    <property type="molecule type" value="mRNA"/>
</dbReference>
<dbReference type="EMBL" id="BC072031">
    <property type="protein sequence ID" value="AAH72031.1"/>
    <property type="molecule type" value="mRNA"/>
</dbReference>
<dbReference type="PIR" id="A41056">
    <property type="entry name" value="A41056"/>
</dbReference>
<dbReference type="RefSeq" id="NP_001084047.1">
    <property type="nucleotide sequence ID" value="NM_001090578.1"/>
</dbReference>
<dbReference type="PDB" id="1XBR">
    <property type="method" value="X-ray"/>
    <property type="resolution" value="2.50 A"/>
    <property type="chains" value="A/B=39-222"/>
</dbReference>
<dbReference type="PDBsum" id="1XBR"/>
<dbReference type="SMR" id="P24781"/>
<dbReference type="IntAct" id="P24781">
    <property type="interactions" value="1"/>
</dbReference>
<dbReference type="DNASU" id="399275"/>
<dbReference type="GeneID" id="399275"/>
<dbReference type="KEGG" id="xla:399275"/>
<dbReference type="AGR" id="Xenbase:XB-GENE-865212"/>
<dbReference type="CTD" id="399275"/>
<dbReference type="Xenbase" id="XB-GENE-865212">
    <property type="gene designation" value="tbxt.S"/>
</dbReference>
<dbReference type="OMA" id="TGAGECP"/>
<dbReference type="OrthoDB" id="7442607at2759"/>
<dbReference type="EvolutionaryTrace" id="P24781"/>
<dbReference type="Proteomes" id="UP000186698">
    <property type="component" value="Chromosome 5S"/>
</dbReference>
<dbReference type="Bgee" id="399275">
    <property type="expression patterns" value="Expressed in gastrula and 6 other cell types or tissues"/>
</dbReference>
<dbReference type="GO" id="GO:0000785">
    <property type="term" value="C:chromatin"/>
    <property type="evidence" value="ECO:0000318"/>
    <property type="project" value="GO_Central"/>
</dbReference>
<dbReference type="GO" id="GO:0005634">
    <property type="term" value="C:nucleus"/>
    <property type="evidence" value="ECO:0000250"/>
    <property type="project" value="UniProtKB"/>
</dbReference>
<dbReference type="GO" id="GO:0000981">
    <property type="term" value="F:DNA-binding transcription factor activity, RNA polymerase II-specific"/>
    <property type="evidence" value="ECO:0000318"/>
    <property type="project" value="GO_Central"/>
</dbReference>
<dbReference type="GO" id="GO:0000978">
    <property type="term" value="F:RNA polymerase II cis-regulatory region sequence-specific DNA binding"/>
    <property type="evidence" value="ECO:0000318"/>
    <property type="project" value="GO_Central"/>
</dbReference>
<dbReference type="GO" id="GO:0061629">
    <property type="term" value="F:RNA polymerase II-specific DNA-binding transcription factor binding"/>
    <property type="evidence" value="ECO:0000353"/>
    <property type="project" value="BHF-UCL"/>
</dbReference>
<dbReference type="GO" id="GO:0001708">
    <property type="term" value="P:cell fate specification"/>
    <property type="evidence" value="ECO:0000318"/>
    <property type="project" value="GO_Central"/>
</dbReference>
<dbReference type="GO" id="GO:0044344">
    <property type="term" value="P:cellular response to fibroblast growth factor stimulus"/>
    <property type="evidence" value="ECO:0000316"/>
    <property type="project" value="BHF-UCL"/>
</dbReference>
<dbReference type="GO" id="GO:0007368">
    <property type="term" value="P:determination of left/right symmetry"/>
    <property type="evidence" value="ECO:0000315"/>
    <property type="project" value="UniProtKB"/>
</dbReference>
<dbReference type="GO" id="GO:0000578">
    <property type="term" value="P:embryonic axis specification"/>
    <property type="evidence" value="ECO:0000315"/>
    <property type="project" value="UniProtKB"/>
</dbReference>
<dbReference type="GO" id="GO:0003007">
    <property type="term" value="P:heart morphogenesis"/>
    <property type="evidence" value="ECO:0000318"/>
    <property type="project" value="GO_Central"/>
</dbReference>
<dbReference type="GO" id="GO:0001707">
    <property type="term" value="P:mesoderm formation"/>
    <property type="evidence" value="ECO:0000318"/>
    <property type="project" value="GO_Central"/>
</dbReference>
<dbReference type="GO" id="GO:0045893">
    <property type="term" value="P:positive regulation of DNA-templated transcription"/>
    <property type="evidence" value="ECO:0000315"/>
    <property type="project" value="UniProtKB"/>
</dbReference>
<dbReference type="GO" id="GO:0045944">
    <property type="term" value="P:positive regulation of transcription by RNA polymerase II"/>
    <property type="evidence" value="ECO:0000315"/>
    <property type="project" value="UniProtKB"/>
</dbReference>
<dbReference type="GO" id="GO:0006357">
    <property type="term" value="P:regulation of transcription by RNA polymerase II"/>
    <property type="evidence" value="ECO:0000318"/>
    <property type="project" value="GO_Central"/>
</dbReference>
<dbReference type="GO" id="GO:0001756">
    <property type="term" value="P:somitogenesis"/>
    <property type="evidence" value="ECO:0000318"/>
    <property type="project" value="GO_Central"/>
</dbReference>
<dbReference type="CDD" id="cd20192">
    <property type="entry name" value="T-box_TBXT_TBX19-like"/>
    <property type="match status" value="1"/>
</dbReference>
<dbReference type="FunFam" id="2.60.40.820:FF:000002">
    <property type="entry name" value="T-box transcription factor Brachyury"/>
    <property type="match status" value="1"/>
</dbReference>
<dbReference type="Gene3D" id="2.60.40.820">
    <property type="entry name" value="Transcription factor, T-box"/>
    <property type="match status" value="1"/>
</dbReference>
<dbReference type="InterPro" id="IPR008967">
    <property type="entry name" value="p53-like_TF_DNA-bd_sf"/>
</dbReference>
<dbReference type="InterPro" id="IPR046360">
    <property type="entry name" value="T-box_DNA-bd"/>
</dbReference>
<dbReference type="InterPro" id="IPR036960">
    <property type="entry name" value="T-box_sf"/>
</dbReference>
<dbReference type="InterPro" id="IPR002070">
    <property type="entry name" value="TF_Brachyury"/>
</dbReference>
<dbReference type="InterPro" id="IPR001699">
    <property type="entry name" value="TF_T-box"/>
</dbReference>
<dbReference type="InterPro" id="IPR018186">
    <property type="entry name" value="TF_T-box_CS"/>
</dbReference>
<dbReference type="PANTHER" id="PTHR11267">
    <property type="entry name" value="T-BOX PROTEIN-RELATED"/>
    <property type="match status" value="1"/>
</dbReference>
<dbReference type="PANTHER" id="PTHR11267:SF83">
    <property type="entry name" value="T-BOX TRANSCRIPTION FACTOR T"/>
    <property type="match status" value="1"/>
</dbReference>
<dbReference type="Pfam" id="PF00907">
    <property type="entry name" value="T-box"/>
    <property type="match status" value="1"/>
</dbReference>
<dbReference type="PRINTS" id="PR00938">
    <property type="entry name" value="BRACHYURY"/>
</dbReference>
<dbReference type="PRINTS" id="PR00937">
    <property type="entry name" value="TBOX"/>
</dbReference>
<dbReference type="SMART" id="SM00425">
    <property type="entry name" value="TBOX"/>
    <property type="match status" value="1"/>
</dbReference>
<dbReference type="SUPFAM" id="SSF49417">
    <property type="entry name" value="p53-like transcription factors"/>
    <property type="match status" value="1"/>
</dbReference>
<dbReference type="PROSITE" id="PS01283">
    <property type="entry name" value="TBOX_1"/>
    <property type="match status" value="1"/>
</dbReference>
<dbReference type="PROSITE" id="PS01264">
    <property type="entry name" value="TBOX_2"/>
    <property type="match status" value="1"/>
</dbReference>
<dbReference type="PROSITE" id="PS50252">
    <property type="entry name" value="TBOX_3"/>
    <property type="match status" value="1"/>
</dbReference>
<keyword id="KW-0002">3D-structure</keyword>
<keyword id="KW-0010">Activator</keyword>
<keyword id="KW-0217">Developmental protein</keyword>
<keyword id="KW-0238">DNA-binding</keyword>
<keyword id="KW-0539">Nucleus</keyword>
<keyword id="KW-1185">Reference proteome</keyword>
<keyword id="KW-0804">Transcription</keyword>
<keyword id="KW-0805">Transcription regulation</keyword>
<feature type="chain" id="PRO_0000184417" description="T-box transcription factor T">
    <location>
        <begin position="1"/>
        <end position="432"/>
    </location>
</feature>
<feature type="DNA-binding region" description="T-box" evidence="2">
    <location>
        <begin position="49"/>
        <end position="217"/>
    </location>
</feature>
<feature type="region of interest" description="Disordered" evidence="3">
    <location>
        <begin position="274"/>
        <end position="306"/>
    </location>
</feature>
<feature type="compositionally biased region" description="Polar residues" evidence="3">
    <location>
        <begin position="293"/>
        <end position="306"/>
    </location>
</feature>
<feature type="strand" evidence="12">
    <location>
        <begin position="41"/>
        <end position="44"/>
    </location>
</feature>
<feature type="helix" evidence="12">
    <location>
        <begin position="47"/>
        <end position="56"/>
    </location>
</feature>
<feature type="strand" evidence="12">
    <location>
        <begin position="59"/>
        <end position="61"/>
    </location>
</feature>
<feature type="strand" evidence="12">
    <location>
        <begin position="74"/>
        <end position="78"/>
    </location>
</feature>
<feature type="strand" evidence="12">
    <location>
        <begin position="84"/>
        <end position="97"/>
    </location>
</feature>
<feature type="strand" evidence="12">
    <location>
        <begin position="99"/>
        <end position="103"/>
    </location>
</feature>
<feature type="strand" evidence="12">
    <location>
        <begin position="106"/>
        <end position="112"/>
    </location>
</feature>
<feature type="strand" evidence="12">
    <location>
        <begin position="128"/>
        <end position="130"/>
    </location>
</feature>
<feature type="helix" evidence="12">
    <location>
        <begin position="131"/>
        <end position="136"/>
    </location>
</feature>
<feature type="strand" evidence="12">
    <location>
        <begin position="145"/>
        <end position="149"/>
    </location>
</feature>
<feature type="turn" evidence="12">
    <location>
        <begin position="152"/>
        <end position="154"/>
    </location>
</feature>
<feature type="strand" evidence="12">
    <location>
        <begin position="160"/>
        <end position="177"/>
    </location>
</feature>
<feature type="strand" evidence="12">
    <location>
        <begin position="180"/>
        <end position="184"/>
    </location>
</feature>
<feature type="helix" evidence="12">
    <location>
        <begin position="186"/>
        <end position="188"/>
    </location>
</feature>
<feature type="strand" evidence="12">
    <location>
        <begin position="190"/>
        <end position="195"/>
    </location>
</feature>
<feature type="helix" evidence="12">
    <location>
        <begin position="199"/>
        <end position="208"/>
    </location>
</feature>
<feature type="helix" evidence="12">
    <location>
        <begin position="210"/>
        <end position="212"/>
    </location>
</feature>
<feature type="helix" evidence="12">
    <location>
        <begin position="213"/>
        <end position="221"/>
    </location>
</feature>
<comment type="function">
    <text evidence="6 7 8">Involved in the transcriptional regulation of genes required for mesoderm formation and differentiation (PubMed:11869292). Binds to the palindromic T site 5'-TTCACACCTAGGTGTGAA-3' DNA sequence (PubMed:11111039). Causes dorsal mesodermal differentiation of animal cap ectoderm when co-expressed with wnt8 and noggin (PubMed:7906224). None of these molecules causes dorsal mesoderm formation when expressed alone (PubMed:7906224). Establishes the left/right axis at early gastrula stage by directly up-regulating mesodermal expression of zic3 (PubMed:11869292).</text>
</comment>
<comment type="subunit">
    <text evidence="9 10">When not bound to DNA, exists as a monomer (PubMed:9349824). Binds DNA as a dimer (PubMed:9349824).</text>
</comment>
<comment type="subcellular location">
    <subcellularLocation>
        <location evidence="1">Nucleus</location>
    </subcellularLocation>
</comment>
<comment type="tissue specificity">
    <text>Expressed in presumptive mesodermal cells around the blastopore, and then in the notochord.</text>
</comment>
<comment type="developmental stage">
    <text>During gastrula and neurula stages in involuting mesoderm and in the notochord.</text>
</comment>
<comment type="induction">
    <text evidence="4 5">By the natural signal and in response to the mesoderm-inducing factors activin A, basic FGF/bFGF, derriere, nodal/nr-1, nodal2/nr-2 and nodal4/nr-4.</text>
</comment>